<organism>
    <name type="scientific">Escherichia coli O6:H1 (strain CFT073 / ATCC 700928 / UPEC)</name>
    <dbReference type="NCBI Taxonomy" id="199310"/>
    <lineage>
        <taxon>Bacteria</taxon>
        <taxon>Pseudomonadati</taxon>
        <taxon>Pseudomonadota</taxon>
        <taxon>Gammaproteobacteria</taxon>
        <taxon>Enterobacterales</taxon>
        <taxon>Enterobacteriaceae</taxon>
        <taxon>Escherichia</taxon>
    </lineage>
</organism>
<accession>Q8FF56</accession>
<dbReference type="EMBL" id="AE014075">
    <property type="protein sequence ID" value="AAN81488.1"/>
    <property type="molecule type" value="Genomic_DNA"/>
</dbReference>
<dbReference type="RefSeq" id="WP_001090871.1">
    <property type="nucleotide sequence ID" value="NC_004431.1"/>
</dbReference>
<dbReference type="SMR" id="Q8FF56"/>
<dbReference type="STRING" id="199310.c3038"/>
<dbReference type="KEGG" id="ecc:c3038"/>
<dbReference type="eggNOG" id="COG1426">
    <property type="taxonomic scope" value="Bacteria"/>
</dbReference>
<dbReference type="HOGENOM" id="CLU_047530_3_1_6"/>
<dbReference type="BioCyc" id="ECOL199310:C3038-MONOMER"/>
<dbReference type="Proteomes" id="UP000001410">
    <property type="component" value="Chromosome"/>
</dbReference>
<dbReference type="GO" id="GO:0005886">
    <property type="term" value="C:plasma membrane"/>
    <property type="evidence" value="ECO:0007669"/>
    <property type="project" value="UniProtKB-SubCell"/>
</dbReference>
<dbReference type="GO" id="GO:0003677">
    <property type="term" value="F:DNA binding"/>
    <property type="evidence" value="ECO:0007669"/>
    <property type="project" value="UniProtKB-KW"/>
</dbReference>
<dbReference type="GO" id="GO:0008360">
    <property type="term" value="P:regulation of cell shape"/>
    <property type="evidence" value="ECO:0007669"/>
    <property type="project" value="UniProtKB-UniRule"/>
</dbReference>
<dbReference type="CDD" id="cd00093">
    <property type="entry name" value="HTH_XRE"/>
    <property type="match status" value="1"/>
</dbReference>
<dbReference type="FunFam" id="1.10.260.40:FF:000014">
    <property type="entry name" value="Cytoskeleton protein RodZ"/>
    <property type="match status" value="1"/>
</dbReference>
<dbReference type="Gene3D" id="1.10.260.40">
    <property type="entry name" value="lambda repressor-like DNA-binding domains"/>
    <property type="match status" value="1"/>
</dbReference>
<dbReference type="HAMAP" id="MF_02017">
    <property type="entry name" value="RodZ"/>
    <property type="match status" value="1"/>
</dbReference>
<dbReference type="InterPro" id="IPR050400">
    <property type="entry name" value="Bact_Cytoskel_RodZ"/>
</dbReference>
<dbReference type="InterPro" id="IPR001387">
    <property type="entry name" value="Cro/C1-type_HTH"/>
</dbReference>
<dbReference type="InterPro" id="IPR010982">
    <property type="entry name" value="Lambda_DNA-bd_dom_sf"/>
</dbReference>
<dbReference type="InterPro" id="IPR023690">
    <property type="entry name" value="RodZ"/>
</dbReference>
<dbReference type="InterPro" id="IPR025194">
    <property type="entry name" value="RodZ-like_C"/>
</dbReference>
<dbReference type="NCBIfam" id="NF008109">
    <property type="entry name" value="PRK10856.1"/>
    <property type="match status" value="1"/>
</dbReference>
<dbReference type="PANTHER" id="PTHR34475">
    <property type="match status" value="1"/>
</dbReference>
<dbReference type="PANTHER" id="PTHR34475:SF1">
    <property type="entry name" value="CYTOSKELETON PROTEIN RODZ"/>
    <property type="match status" value="1"/>
</dbReference>
<dbReference type="Pfam" id="PF13413">
    <property type="entry name" value="HTH_25"/>
    <property type="match status" value="1"/>
</dbReference>
<dbReference type="Pfam" id="PF13464">
    <property type="entry name" value="RodZ_C"/>
    <property type="match status" value="1"/>
</dbReference>
<dbReference type="SMART" id="SM00530">
    <property type="entry name" value="HTH_XRE"/>
    <property type="match status" value="1"/>
</dbReference>
<dbReference type="SUPFAM" id="SSF47413">
    <property type="entry name" value="lambda repressor-like DNA-binding domains"/>
    <property type="match status" value="1"/>
</dbReference>
<dbReference type="PROSITE" id="PS50943">
    <property type="entry name" value="HTH_CROC1"/>
    <property type="match status" value="1"/>
</dbReference>
<gene>
    <name evidence="1" type="primary">rodZ</name>
    <name type="ordered locus">c3038</name>
</gene>
<name>RODZ_ECOL6</name>
<feature type="chain" id="PRO_0000361842" description="Cytoskeleton protein RodZ">
    <location>
        <begin position="1"/>
        <end position="335"/>
    </location>
</feature>
<feature type="topological domain" description="Cytoplasmic" evidence="1">
    <location>
        <begin position="1"/>
        <end position="111"/>
    </location>
</feature>
<feature type="transmembrane region" description="Helical; Signal-anchor for type II membrane protein" evidence="1">
    <location>
        <begin position="112"/>
        <end position="132"/>
    </location>
</feature>
<feature type="topological domain" description="Periplasmic" evidence="1">
    <location>
        <begin position="133"/>
        <end position="335"/>
    </location>
</feature>
<feature type="domain" description="HTH cro/C1-type" evidence="1">
    <location>
        <begin position="19"/>
        <end position="71"/>
    </location>
</feature>
<feature type="DNA-binding region" description="H-T-H motif" evidence="1">
    <location>
        <begin position="30"/>
        <end position="49"/>
    </location>
</feature>
<feature type="region of interest" description="Disordered" evidence="2">
    <location>
        <begin position="148"/>
        <end position="244"/>
    </location>
</feature>
<feature type="compositionally biased region" description="Polar residues" evidence="2">
    <location>
        <begin position="148"/>
        <end position="164"/>
    </location>
</feature>
<feature type="compositionally biased region" description="Low complexity" evidence="2">
    <location>
        <begin position="165"/>
        <end position="205"/>
    </location>
</feature>
<feature type="compositionally biased region" description="Low complexity" evidence="2">
    <location>
        <begin position="217"/>
        <end position="239"/>
    </location>
</feature>
<reference key="1">
    <citation type="journal article" date="2002" name="Proc. Natl. Acad. Sci. U.S.A.">
        <title>Extensive mosaic structure revealed by the complete genome sequence of uropathogenic Escherichia coli.</title>
        <authorList>
            <person name="Welch R.A."/>
            <person name="Burland V."/>
            <person name="Plunkett G. III"/>
            <person name="Redford P."/>
            <person name="Roesch P."/>
            <person name="Rasko D."/>
            <person name="Buckles E.L."/>
            <person name="Liou S.-R."/>
            <person name="Boutin A."/>
            <person name="Hackett J."/>
            <person name="Stroud D."/>
            <person name="Mayhew G.F."/>
            <person name="Rose D.J."/>
            <person name="Zhou S."/>
            <person name="Schwartz D.C."/>
            <person name="Perna N.T."/>
            <person name="Mobley H.L.T."/>
            <person name="Donnenberg M.S."/>
            <person name="Blattner F.R."/>
        </authorList>
    </citation>
    <scope>NUCLEOTIDE SEQUENCE [LARGE SCALE GENOMIC DNA]</scope>
    <source>
        <strain>CFT073 / ATCC 700928 / UPEC</strain>
    </source>
</reference>
<proteinExistence type="inferred from homology"/>
<comment type="function">
    <text evidence="1">Cytoskeletal protein that is involved in cell-shape control through regulation of the length of the long axis.</text>
</comment>
<comment type="subcellular location">
    <subcellularLocation>
        <location evidence="1">Cell inner membrane</location>
        <topology evidence="1">Single-pass type II membrane protein</topology>
    </subcellularLocation>
    <text evidence="1">Forms helical filaments along the long axis of the cell.</text>
</comment>
<comment type="domain">
    <text evidence="1">The helix-turn-helix (HTH) motif in the cytoplasmic domain of the N-terminus is involved in the formation of spirals to maintain the rigid rod shape. As this protein is anchored in the cytoplasmic membrane, the HTH motif may contribute to protein-protein interactions to form the RodZ helix, which is localized beneath the cytoplasmic membrane. The C-terminal domain may be critical for determination of the rod shape by probably interacting with enzymes required for synthesis of the peptidoglycan layer, including PBPs in the periplasm.</text>
</comment>
<comment type="similarity">
    <text evidence="1">Belongs to the RodZ family.</text>
</comment>
<sequence length="335" mass="36095">MNTEATHDQNEALTTGARLRNAREQLGLSQQAVAERLCLKVSTVRDIEEDKAPADLASTFLRGYIRSYARLVHIPEEELLPGLEKQAPLRAAKVAPVQSFSLGKRRKKRDGWLMTFTWLVLFVVIGLSGAWWWQDHKAQQEEITTMADQSSAELNNNQSQSVPLDTSTTTDQAMATTPTSPVDTTATNTQTPAVTAPAPAVDPQQNAVVPPSQANVDTAATPAPAATTTPDGAAPLPTDQAGVTTPAVDPNALVMNFTADCWLEVTDATGKKLFSGMQRKDGNLNLTGQAPYKLKIGAPAAVQIQYQGKPVDLSRFIRTNQVARLTLNAEQSPAQ</sequence>
<keyword id="KW-0997">Cell inner membrane</keyword>
<keyword id="KW-1003">Cell membrane</keyword>
<keyword id="KW-0133">Cell shape</keyword>
<keyword id="KW-0238">DNA-binding</keyword>
<keyword id="KW-0472">Membrane</keyword>
<keyword id="KW-1185">Reference proteome</keyword>
<keyword id="KW-0735">Signal-anchor</keyword>
<keyword id="KW-0812">Transmembrane</keyword>
<keyword id="KW-1133">Transmembrane helix</keyword>
<protein>
    <recommendedName>
        <fullName evidence="1">Cytoskeleton protein RodZ</fullName>
    </recommendedName>
</protein>
<evidence type="ECO:0000255" key="1">
    <source>
        <dbReference type="HAMAP-Rule" id="MF_02017"/>
    </source>
</evidence>
<evidence type="ECO:0000256" key="2">
    <source>
        <dbReference type="SAM" id="MobiDB-lite"/>
    </source>
</evidence>